<protein>
    <recommendedName>
        <fullName evidence="1">Uroporphyrinogen decarboxylase</fullName>
        <shortName evidence="1">UPD</shortName>
        <shortName evidence="1">URO-D</shortName>
        <ecNumber evidence="1">4.1.1.37</ecNumber>
    </recommendedName>
</protein>
<dbReference type="EC" id="4.1.1.37" evidence="1"/>
<dbReference type="EMBL" id="CP001635">
    <property type="protein sequence ID" value="ACS17381.1"/>
    <property type="molecule type" value="Genomic_DNA"/>
</dbReference>
<dbReference type="SMR" id="C5CLI6"/>
<dbReference type="STRING" id="543728.Vapar_0727"/>
<dbReference type="KEGG" id="vap:Vapar_0727"/>
<dbReference type="eggNOG" id="COG0407">
    <property type="taxonomic scope" value="Bacteria"/>
</dbReference>
<dbReference type="HOGENOM" id="CLU_040933_0_0_4"/>
<dbReference type="OrthoDB" id="9806656at2"/>
<dbReference type="UniPathway" id="UPA00251">
    <property type="reaction ID" value="UER00321"/>
</dbReference>
<dbReference type="GO" id="GO:0005829">
    <property type="term" value="C:cytosol"/>
    <property type="evidence" value="ECO:0007669"/>
    <property type="project" value="TreeGrafter"/>
</dbReference>
<dbReference type="GO" id="GO:0004853">
    <property type="term" value="F:uroporphyrinogen decarboxylase activity"/>
    <property type="evidence" value="ECO:0007669"/>
    <property type="project" value="UniProtKB-UniRule"/>
</dbReference>
<dbReference type="GO" id="GO:0019353">
    <property type="term" value="P:protoporphyrinogen IX biosynthetic process from glutamate"/>
    <property type="evidence" value="ECO:0007669"/>
    <property type="project" value="TreeGrafter"/>
</dbReference>
<dbReference type="CDD" id="cd00717">
    <property type="entry name" value="URO-D"/>
    <property type="match status" value="1"/>
</dbReference>
<dbReference type="FunFam" id="3.20.20.210:FF:000001">
    <property type="entry name" value="Uroporphyrinogen decarboxylase"/>
    <property type="match status" value="1"/>
</dbReference>
<dbReference type="Gene3D" id="3.20.20.210">
    <property type="match status" value="1"/>
</dbReference>
<dbReference type="HAMAP" id="MF_00218">
    <property type="entry name" value="URO_D"/>
    <property type="match status" value="1"/>
</dbReference>
<dbReference type="InterPro" id="IPR038071">
    <property type="entry name" value="UROD/MetE-like_sf"/>
</dbReference>
<dbReference type="InterPro" id="IPR006361">
    <property type="entry name" value="Uroporphyrinogen_deCO2ase_HemE"/>
</dbReference>
<dbReference type="InterPro" id="IPR000257">
    <property type="entry name" value="Uroporphyrinogen_deCOase"/>
</dbReference>
<dbReference type="NCBIfam" id="TIGR01464">
    <property type="entry name" value="hemE"/>
    <property type="match status" value="1"/>
</dbReference>
<dbReference type="PANTHER" id="PTHR21091">
    <property type="entry name" value="METHYLTETRAHYDROFOLATE:HOMOCYSTEINE METHYLTRANSFERASE RELATED"/>
    <property type="match status" value="1"/>
</dbReference>
<dbReference type="PANTHER" id="PTHR21091:SF169">
    <property type="entry name" value="UROPORPHYRINOGEN DECARBOXYLASE"/>
    <property type="match status" value="1"/>
</dbReference>
<dbReference type="Pfam" id="PF01208">
    <property type="entry name" value="URO-D"/>
    <property type="match status" value="1"/>
</dbReference>
<dbReference type="SUPFAM" id="SSF51726">
    <property type="entry name" value="UROD/MetE-like"/>
    <property type="match status" value="1"/>
</dbReference>
<dbReference type="PROSITE" id="PS00906">
    <property type="entry name" value="UROD_1"/>
    <property type="match status" value="1"/>
</dbReference>
<dbReference type="PROSITE" id="PS00907">
    <property type="entry name" value="UROD_2"/>
    <property type="match status" value="1"/>
</dbReference>
<sequence>MPFAPLQNDTFLRACWRQATDHTPVWLMRQAGRYLPEYVATRARAGSFMGLATNTDYATEVTLQPLERYPLDAAILFSDILTVPDAMGLGLSFEAGEGPRFARPVQGEAAVAALEVPDMAKLRYVFDAVASIRKALDGRVPLIGFSGSPWTLACYMVEGAGSSDYRLVKSMLYSRPDLMHRLLAVNADSVAAYLNAQIDAGAQAVMVFDSWGGVLADGAFQEFSLAYTARVLAGLQRNGADGQPVPRIVFTKGGGLWLEAMRELDCEVLGVDWTVNLSAARRLVGEGTDAKAKALQGNIDPNVLFAPPAQIEAEVAKVLQAFGQPHADAAAKGPTHIFNLGHGISQFTPPDHVAALVQAVHAQSRALRKG</sequence>
<name>DCUP_VARPS</name>
<accession>C5CLI6</accession>
<keyword id="KW-0963">Cytoplasm</keyword>
<keyword id="KW-0210">Decarboxylase</keyword>
<keyword id="KW-0456">Lyase</keyword>
<keyword id="KW-0627">Porphyrin biosynthesis</keyword>
<gene>
    <name evidence="1" type="primary">hemE</name>
    <name type="ordered locus">Vapar_0727</name>
</gene>
<comment type="function">
    <text evidence="1">Catalyzes the decarboxylation of four acetate groups of uroporphyrinogen-III to yield coproporphyrinogen-III.</text>
</comment>
<comment type="catalytic activity">
    <reaction evidence="1">
        <text>uroporphyrinogen III + 4 H(+) = coproporphyrinogen III + 4 CO2</text>
        <dbReference type="Rhea" id="RHEA:19865"/>
        <dbReference type="ChEBI" id="CHEBI:15378"/>
        <dbReference type="ChEBI" id="CHEBI:16526"/>
        <dbReference type="ChEBI" id="CHEBI:57308"/>
        <dbReference type="ChEBI" id="CHEBI:57309"/>
        <dbReference type="EC" id="4.1.1.37"/>
    </reaction>
</comment>
<comment type="pathway">
    <text evidence="1">Porphyrin-containing compound metabolism; protoporphyrin-IX biosynthesis; coproporphyrinogen-III from 5-aminolevulinate: step 4/4.</text>
</comment>
<comment type="subunit">
    <text evidence="1">Homodimer.</text>
</comment>
<comment type="subcellular location">
    <subcellularLocation>
        <location evidence="1">Cytoplasm</location>
    </subcellularLocation>
</comment>
<comment type="similarity">
    <text evidence="1">Belongs to the uroporphyrinogen decarboxylase family.</text>
</comment>
<organism>
    <name type="scientific">Variovorax paradoxus (strain S110)</name>
    <dbReference type="NCBI Taxonomy" id="543728"/>
    <lineage>
        <taxon>Bacteria</taxon>
        <taxon>Pseudomonadati</taxon>
        <taxon>Pseudomonadota</taxon>
        <taxon>Betaproteobacteria</taxon>
        <taxon>Burkholderiales</taxon>
        <taxon>Comamonadaceae</taxon>
        <taxon>Variovorax</taxon>
    </lineage>
</organism>
<feature type="chain" id="PRO_1000204243" description="Uroporphyrinogen decarboxylase">
    <location>
        <begin position="1"/>
        <end position="370"/>
    </location>
</feature>
<feature type="binding site" evidence="1">
    <location>
        <begin position="29"/>
        <end position="33"/>
    </location>
    <ligand>
        <name>substrate</name>
    </ligand>
</feature>
<feature type="binding site" evidence="1">
    <location>
        <position position="79"/>
    </location>
    <ligand>
        <name>substrate</name>
    </ligand>
</feature>
<feature type="binding site" evidence="1">
    <location>
        <position position="155"/>
    </location>
    <ligand>
        <name>substrate</name>
    </ligand>
</feature>
<feature type="binding site" evidence="1">
    <location>
        <position position="210"/>
    </location>
    <ligand>
        <name>substrate</name>
    </ligand>
</feature>
<feature type="binding site" evidence="1">
    <location>
        <position position="342"/>
    </location>
    <ligand>
        <name>substrate</name>
    </ligand>
</feature>
<feature type="site" description="Transition state stabilizer" evidence="1">
    <location>
        <position position="79"/>
    </location>
</feature>
<proteinExistence type="inferred from homology"/>
<evidence type="ECO:0000255" key="1">
    <source>
        <dbReference type="HAMAP-Rule" id="MF_00218"/>
    </source>
</evidence>
<reference key="1">
    <citation type="journal article" date="2011" name="J. Bacteriol.">
        <title>Complete genome sequence of the metabolically versatile plant growth-promoting endophyte, Variovorax paradoxus S110.</title>
        <authorList>
            <person name="Han J.I."/>
            <person name="Choi H.K."/>
            <person name="Lee S.W."/>
            <person name="Orwin P.M."/>
            <person name="Kim J."/>
            <person name="Laroe S.L."/>
            <person name="Kim T.G."/>
            <person name="O'Neil J."/>
            <person name="Leadbetter J.R."/>
            <person name="Lee S.Y."/>
            <person name="Hur C.G."/>
            <person name="Spain J.C."/>
            <person name="Ovchinnikova G."/>
            <person name="Goodwin L."/>
            <person name="Han C."/>
        </authorList>
    </citation>
    <scope>NUCLEOTIDE SEQUENCE [LARGE SCALE GENOMIC DNA]</scope>
    <source>
        <strain>S110</strain>
    </source>
</reference>